<feature type="chain" id="PRO_1000146026" description="tRNA N6-adenosine threonylcarbamoyltransferase">
    <location>
        <begin position="1"/>
        <end position="341"/>
    </location>
</feature>
<feature type="binding site" evidence="1">
    <location>
        <position position="115"/>
    </location>
    <ligand>
        <name>Fe cation</name>
        <dbReference type="ChEBI" id="CHEBI:24875"/>
    </ligand>
</feature>
<feature type="binding site" evidence="1">
    <location>
        <position position="119"/>
    </location>
    <ligand>
        <name>Fe cation</name>
        <dbReference type="ChEBI" id="CHEBI:24875"/>
    </ligand>
</feature>
<feature type="binding site" evidence="1">
    <location>
        <begin position="138"/>
        <end position="142"/>
    </location>
    <ligand>
        <name>substrate</name>
    </ligand>
</feature>
<feature type="binding site" evidence="1">
    <location>
        <position position="171"/>
    </location>
    <ligand>
        <name>substrate</name>
    </ligand>
</feature>
<feature type="binding site" evidence="1">
    <location>
        <position position="184"/>
    </location>
    <ligand>
        <name>substrate</name>
    </ligand>
</feature>
<feature type="binding site" evidence="1">
    <location>
        <position position="276"/>
    </location>
    <ligand>
        <name>substrate</name>
    </ligand>
</feature>
<feature type="binding site" evidence="1">
    <location>
        <position position="304"/>
    </location>
    <ligand>
        <name>Fe cation</name>
        <dbReference type="ChEBI" id="CHEBI:24875"/>
    </ligand>
</feature>
<gene>
    <name evidence="1" type="primary">tsaD</name>
    <name type="synonym">gcp</name>
    <name type="ordered locus">Smal_0327</name>
</gene>
<sequence>MRVLGIESSCDETGVAVYDTDLAGSAALRAHAVYSQIALHAEYGGVVPELASRDHVRKLLPLVRQTLAEAGLGVGDIDGVAYTAGPGLVGALLVGAGVARSLAWALEVPAVGVHHMEGHLLAPLMEDDPPQAPFVALLVSGGHTQLVAVDAIGQYRLLGETLDDAAGEAFDKTAKMMGLPYPGGPQLARLAEQGTPGVYRFARPMIDRPGLDFSFSGLKTQVLMAWRDSDQSEQTRADIARGFEDAVVETLSIKCERALEAAGTNVIVVAGGVGANKRLRARLQQMAERLGGRACFPRPALCTDNGAMIAFAGALRLQAGQHSPPKVDVTPRWDMATLPAV</sequence>
<proteinExistence type="inferred from homology"/>
<comment type="function">
    <text evidence="1">Required for the formation of a threonylcarbamoyl group on adenosine at position 37 (t(6)A37) in tRNAs that read codons beginning with adenine. Is involved in the transfer of the threonylcarbamoyl moiety of threonylcarbamoyl-AMP (TC-AMP) to the N6 group of A37, together with TsaE and TsaB. TsaD likely plays a direct catalytic role in this reaction.</text>
</comment>
<comment type="catalytic activity">
    <reaction evidence="1">
        <text>L-threonylcarbamoyladenylate + adenosine(37) in tRNA = N(6)-L-threonylcarbamoyladenosine(37) in tRNA + AMP + H(+)</text>
        <dbReference type="Rhea" id="RHEA:37059"/>
        <dbReference type="Rhea" id="RHEA-COMP:10162"/>
        <dbReference type="Rhea" id="RHEA-COMP:10163"/>
        <dbReference type="ChEBI" id="CHEBI:15378"/>
        <dbReference type="ChEBI" id="CHEBI:73682"/>
        <dbReference type="ChEBI" id="CHEBI:74411"/>
        <dbReference type="ChEBI" id="CHEBI:74418"/>
        <dbReference type="ChEBI" id="CHEBI:456215"/>
        <dbReference type="EC" id="2.3.1.234"/>
    </reaction>
</comment>
<comment type="cofactor">
    <cofactor evidence="1">
        <name>Fe(2+)</name>
        <dbReference type="ChEBI" id="CHEBI:29033"/>
    </cofactor>
    <text evidence="1">Binds 1 Fe(2+) ion per subunit.</text>
</comment>
<comment type="subcellular location">
    <subcellularLocation>
        <location evidence="1">Cytoplasm</location>
    </subcellularLocation>
</comment>
<comment type="similarity">
    <text evidence="1">Belongs to the KAE1 / TsaD family.</text>
</comment>
<organism>
    <name type="scientific">Stenotrophomonas maltophilia (strain R551-3)</name>
    <dbReference type="NCBI Taxonomy" id="391008"/>
    <lineage>
        <taxon>Bacteria</taxon>
        <taxon>Pseudomonadati</taxon>
        <taxon>Pseudomonadota</taxon>
        <taxon>Gammaproteobacteria</taxon>
        <taxon>Lysobacterales</taxon>
        <taxon>Lysobacteraceae</taxon>
        <taxon>Stenotrophomonas</taxon>
        <taxon>Stenotrophomonas maltophilia group</taxon>
    </lineage>
</organism>
<reference key="1">
    <citation type="submission" date="2008-06" db="EMBL/GenBank/DDBJ databases">
        <title>Complete sequence of Stenotrophomonas maltophilia R551-3.</title>
        <authorList>
            <consortium name="US DOE Joint Genome Institute"/>
            <person name="Lucas S."/>
            <person name="Copeland A."/>
            <person name="Lapidus A."/>
            <person name="Glavina del Rio T."/>
            <person name="Dalin E."/>
            <person name="Tice H."/>
            <person name="Pitluck S."/>
            <person name="Chain P."/>
            <person name="Malfatti S."/>
            <person name="Shin M."/>
            <person name="Vergez L."/>
            <person name="Lang D."/>
            <person name="Schmutz J."/>
            <person name="Larimer F."/>
            <person name="Land M."/>
            <person name="Hauser L."/>
            <person name="Kyrpides N."/>
            <person name="Mikhailova N."/>
            <person name="Taghavi S."/>
            <person name="Monchy S."/>
            <person name="Newman L."/>
            <person name="Vangronsveld J."/>
            <person name="van der Lelie D."/>
            <person name="Richardson P."/>
        </authorList>
    </citation>
    <scope>NUCLEOTIDE SEQUENCE [LARGE SCALE GENOMIC DNA]</scope>
    <source>
        <strain>R551-3</strain>
    </source>
</reference>
<accession>B4SHI9</accession>
<keyword id="KW-0012">Acyltransferase</keyword>
<keyword id="KW-0963">Cytoplasm</keyword>
<keyword id="KW-0408">Iron</keyword>
<keyword id="KW-0479">Metal-binding</keyword>
<keyword id="KW-0808">Transferase</keyword>
<keyword id="KW-0819">tRNA processing</keyword>
<protein>
    <recommendedName>
        <fullName evidence="1">tRNA N6-adenosine threonylcarbamoyltransferase</fullName>
        <ecNumber evidence="1">2.3.1.234</ecNumber>
    </recommendedName>
    <alternativeName>
        <fullName evidence="1">N6-L-threonylcarbamoyladenine synthase</fullName>
        <shortName evidence="1">t(6)A synthase</shortName>
    </alternativeName>
    <alternativeName>
        <fullName evidence="1">t(6)A37 threonylcarbamoyladenosine biosynthesis protein TsaD</fullName>
    </alternativeName>
    <alternativeName>
        <fullName evidence="1">tRNA threonylcarbamoyladenosine biosynthesis protein TsaD</fullName>
    </alternativeName>
</protein>
<evidence type="ECO:0000255" key="1">
    <source>
        <dbReference type="HAMAP-Rule" id="MF_01445"/>
    </source>
</evidence>
<dbReference type="EC" id="2.3.1.234" evidence="1"/>
<dbReference type="EMBL" id="CP001111">
    <property type="protein sequence ID" value="ACF50032.1"/>
    <property type="molecule type" value="Genomic_DNA"/>
</dbReference>
<dbReference type="RefSeq" id="WP_012509844.1">
    <property type="nucleotide sequence ID" value="NC_011071.1"/>
</dbReference>
<dbReference type="SMR" id="B4SHI9"/>
<dbReference type="STRING" id="391008.Smal_0327"/>
<dbReference type="KEGG" id="smt:Smal_0327"/>
<dbReference type="eggNOG" id="COG0533">
    <property type="taxonomic scope" value="Bacteria"/>
</dbReference>
<dbReference type="HOGENOM" id="CLU_023208_0_0_6"/>
<dbReference type="OrthoDB" id="9806197at2"/>
<dbReference type="Proteomes" id="UP000001867">
    <property type="component" value="Chromosome"/>
</dbReference>
<dbReference type="GO" id="GO:0005737">
    <property type="term" value="C:cytoplasm"/>
    <property type="evidence" value="ECO:0007669"/>
    <property type="project" value="UniProtKB-SubCell"/>
</dbReference>
<dbReference type="GO" id="GO:0005506">
    <property type="term" value="F:iron ion binding"/>
    <property type="evidence" value="ECO:0007669"/>
    <property type="project" value="UniProtKB-UniRule"/>
</dbReference>
<dbReference type="GO" id="GO:0061711">
    <property type="term" value="F:N(6)-L-threonylcarbamoyladenine synthase activity"/>
    <property type="evidence" value="ECO:0007669"/>
    <property type="project" value="UniProtKB-EC"/>
</dbReference>
<dbReference type="GO" id="GO:0002949">
    <property type="term" value="P:tRNA threonylcarbamoyladenosine modification"/>
    <property type="evidence" value="ECO:0007669"/>
    <property type="project" value="UniProtKB-UniRule"/>
</dbReference>
<dbReference type="CDD" id="cd24133">
    <property type="entry name" value="ASKHA_NBD_TsaD_bac"/>
    <property type="match status" value="1"/>
</dbReference>
<dbReference type="FunFam" id="3.30.420.40:FF:000031">
    <property type="entry name" value="tRNA N6-adenosine threonylcarbamoyltransferase"/>
    <property type="match status" value="1"/>
</dbReference>
<dbReference type="Gene3D" id="3.30.420.40">
    <property type="match status" value="2"/>
</dbReference>
<dbReference type="HAMAP" id="MF_01445">
    <property type="entry name" value="TsaD"/>
    <property type="match status" value="1"/>
</dbReference>
<dbReference type="InterPro" id="IPR043129">
    <property type="entry name" value="ATPase_NBD"/>
</dbReference>
<dbReference type="InterPro" id="IPR000905">
    <property type="entry name" value="Gcp-like_dom"/>
</dbReference>
<dbReference type="InterPro" id="IPR017861">
    <property type="entry name" value="KAE1/TsaD"/>
</dbReference>
<dbReference type="InterPro" id="IPR022450">
    <property type="entry name" value="TsaD"/>
</dbReference>
<dbReference type="NCBIfam" id="TIGR00329">
    <property type="entry name" value="gcp_kae1"/>
    <property type="match status" value="1"/>
</dbReference>
<dbReference type="NCBIfam" id="TIGR03723">
    <property type="entry name" value="T6A_TsaD_YgjD"/>
    <property type="match status" value="1"/>
</dbReference>
<dbReference type="PANTHER" id="PTHR11735">
    <property type="entry name" value="TRNA N6-ADENOSINE THREONYLCARBAMOYLTRANSFERASE"/>
    <property type="match status" value="1"/>
</dbReference>
<dbReference type="PANTHER" id="PTHR11735:SF6">
    <property type="entry name" value="TRNA N6-ADENOSINE THREONYLCARBAMOYLTRANSFERASE, MITOCHONDRIAL"/>
    <property type="match status" value="1"/>
</dbReference>
<dbReference type="Pfam" id="PF00814">
    <property type="entry name" value="TsaD"/>
    <property type="match status" value="1"/>
</dbReference>
<dbReference type="PRINTS" id="PR00789">
    <property type="entry name" value="OSIALOPTASE"/>
</dbReference>
<dbReference type="SUPFAM" id="SSF53067">
    <property type="entry name" value="Actin-like ATPase domain"/>
    <property type="match status" value="2"/>
</dbReference>
<name>TSAD_STRM5</name>